<evidence type="ECO:0000255" key="1">
    <source>
        <dbReference type="HAMAP-Rule" id="MF_00575"/>
    </source>
</evidence>
<feature type="chain" id="PRO_1000212093" description="UDP-2,3-diacylglucosamine hydrolase">
    <location>
        <begin position="1"/>
        <end position="259"/>
    </location>
</feature>
<feature type="binding site" evidence="1">
    <location>
        <position position="8"/>
    </location>
    <ligand>
        <name>Mn(2+)</name>
        <dbReference type="ChEBI" id="CHEBI:29035"/>
        <label>1</label>
    </ligand>
</feature>
<feature type="binding site" evidence="1">
    <location>
        <position position="10"/>
    </location>
    <ligand>
        <name>Mn(2+)</name>
        <dbReference type="ChEBI" id="CHEBI:29035"/>
        <label>1</label>
    </ligand>
</feature>
<feature type="binding site" evidence="1">
    <location>
        <position position="41"/>
    </location>
    <ligand>
        <name>Mn(2+)</name>
        <dbReference type="ChEBI" id="CHEBI:29035"/>
        <label>1</label>
    </ligand>
</feature>
<feature type="binding site" evidence="1">
    <location>
        <position position="41"/>
    </location>
    <ligand>
        <name>Mn(2+)</name>
        <dbReference type="ChEBI" id="CHEBI:29035"/>
        <label>2</label>
    </ligand>
</feature>
<feature type="binding site" evidence="1">
    <location>
        <begin position="79"/>
        <end position="80"/>
    </location>
    <ligand>
        <name>substrate</name>
    </ligand>
</feature>
<feature type="binding site" evidence="1">
    <location>
        <position position="79"/>
    </location>
    <ligand>
        <name>Mn(2+)</name>
        <dbReference type="ChEBI" id="CHEBI:29035"/>
        <label>2</label>
    </ligand>
</feature>
<feature type="binding site" evidence="1">
    <location>
        <position position="114"/>
    </location>
    <ligand>
        <name>Mn(2+)</name>
        <dbReference type="ChEBI" id="CHEBI:29035"/>
        <label>2</label>
    </ligand>
</feature>
<feature type="binding site" evidence="1">
    <location>
        <position position="122"/>
    </location>
    <ligand>
        <name>substrate</name>
    </ligand>
</feature>
<feature type="binding site" evidence="1">
    <location>
        <position position="160"/>
    </location>
    <ligand>
        <name>substrate</name>
    </ligand>
</feature>
<feature type="binding site" evidence="1">
    <location>
        <position position="164"/>
    </location>
    <ligand>
        <name>substrate</name>
    </ligand>
</feature>
<feature type="binding site" evidence="1">
    <location>
        <position position="167"/>
    </location>
    <ligand>
        <name>substrate</name>
    </ligand>
</feature>
<feature type="binding site" evidence="1">
    <location>
        <position position="195"/>
    </location>
    <ligand>
        <name>Mn(2+)</name>
        <dbReference type="ChEBI" id="CHEBI:29035"/>
        <label>2</label>
    </ligand>
</feature>
<feature type="binding site" evidence="1">
    <location>
        <position position="195"/>
    </location>
    <ligand>
        <name>substrate</name>
    </ligand>
</feature>
<feature type="binding site" evidence="1">
    <location>
        <position position="197"/>
    </location>
    <ligand>
        <name>Mn(2+)</name>
        <dbReference type="ChEBI" id="CHEBI:29035"/>
        <label>1</label>
    </ligand>
</feature>
<comment type="function">
    <text evidence="1">Hydrolyzes the pyrophosphate bond of UDP-2,3-diacylglucosamine to yield 2,3-diacylglucosamine 1-phosphate (lipid X) and UMP by catalyzing the attack of water at the alpha-P atom. Involved in the biosynthesis of lipid A, a phosphorylated glycolipid that anchors the lipopolysaccharide to the outer membrane of the cell.</text>
</comment>
<comment type="catalytic activity">
    <reaction evidence="1">
        <text>UDP-2-N,3-O-bis[(3R)-3-hydroxytetradecanoyl]-alpha-D-glucosamine + H2O = 2-N,3-O-bis[(3R)-3-hydroxytetradecanoyl]-alpha-D-glucosaminyl 1-phosphate + UMP + 2 H(+)</text>
        <dbReference type="Rhea" id="RHEA:25213"/>
        <dbReference type="ChEBI" id="CHEBI:15377"/>
        <dbReference type="ChEBI" id="CHEBI:15378"/>
        <dbReference type="ChEBI" id="CHEBI:57865"/>
        <dbReference type="ChEBI" id="CHEBI:57957"/>
        <dbReference type="ChEBI" id="CHEBI:78847"/>
        <dbReference type="EC" id="3.6.1.54"/>
    </reaction>
</comment>
<comment type="cofactor">
    <cofactor evidence="1">
        <name>Mn(2+)</name>
        <dbReference type="ChEBI" id="CHEBI:29035"/>
    </cofactor>
    <text evidence="1">Binds 2 Mn(2+) ions per subunit in a binuclear metal center.</text>
</comment>
<comment type="pathway">
    <text evidence="1">Glycolipid biosynthesis; lipid IV(A) biosynthesis; lipid IV(A) from (3R)-3-hydroxytetradecanoyl-[acyl-carrier-protein] and UDP-N-acetyl-alpha-D-glucosamine: step 4/6.</text>
</comment>
<comment type="subcellular location">
    <subcellularLocation>
        <location evidence="1">Cell inner membrane</location>
        <topology evidence="1">Peripheral membrane protein</topology>
        <orientation evidence="1">Cytoplasmic side</orientation>
    </subcellularLocation>
</comment>
<comment type="similarity">
    <text evidence="1">Belongs to the LpxH family.</text>
</comment>
<proteinExistence type="inferred from homology"/>
<accession>C5B8V8</accession>
<reference key="1">
    <citation type="submission" date="2009-03" db="EMBL/GenBank/DDBJ databases">
        <title>Complete genome sequence of Edwardsiella ictaluri 93-146.</title>
        <authorList>
            <person name="Williams M.L."/>
            <person name="Gillaspy A.F."/>
            <person name="Dyer D.W."/>
            <person name="Thune R.L."/>
            <person name="Waldbieser G.C."/>
            <person name="Schuster S.C."/>
            <person name="Gipson J."/>
            <person name="Zaitshik J."/>
            <person name="Landry C."/>
            <person name="Lawrence M.L."/>
        </authorList>
    </citation>
    <scope>NUCLEOTIDE SEQUENCE [LARGE SCALE GENOMIC DNA]</scope>
    <source>
        <strain>93-146</strain>
    </source>
</reference>
<gene>
    <name evidence="1" type="primary">lpxH</name>
    <name type="ordered locus">NT01EI_3008</name>
</gene>
<name>LPXH_EDWI9</name>
<organism>
    <name type="scientific">Edwardsiella ictaluri (strain 93-146)</name>
    <dbReference type="NCBI Taxonomy" id="634503"/>
    <lineage>
        <taxon>Bacteria</taxon>
        <taxon>Pseudomonadati</taxon>
        <taxon>Pseudomonadota</taxon>
        <taxon>Gammaproteobacteria</taxon>
        <taxon>Enterobacterales</taxon>
        <taxon>Hafniaceae</taxon>
        <taxon>Edwardsiella</taxon>
    </lineage>
</organism>
<keyword id="KW-0997">Cell inner membrane</keyword>
<keyword id="KW-1003">Cell membrane</keyword>
<keyword id="KW-0378">Hydrolase</keyword>
<keyword id="KW-0441">Lipid A biosynthesis</keyword>
<keyword id="KW-0444">Lipid biosynthesis</keyword>
<keyword id="KW-0443">Lipid metabolism</keyword>
<keyword id="KW-0464">Manganese</keyword>
<keyword id="KW-0472">Membrane</keyword>
<keyword id="KW-0479">Metal-binding</keyword>
<dbReference type="EC" id="3.6.1.54" evidence="1"/>
<dbReference type="EMBL" id="CP001600">
    <property type="protein sequence ID" value="ACR70161.1"/>
    <property type="molecule type" value="Genomic_DNA"/>
</dbReference>
<dbReference type="RefSeq" id="WP_015872253.1">
    <property type="nucleotide sequence ID" value="NZ_CP169062.1"/>
</dbReference>
<dbReference type="SMR" id="C5B8V8"/>
<dbReference type="STRING" id="67780.B6E78_06915"/>
<dbReference type="GeneID" id="69539884"/>
<dbReference type="KEGG" id="eic:NT01EI_3008"/>
<dbReference type="PATRIC" id="fig|634503.3.peg.2689"/>
<dbReference type="HOGENOM" id="CLU_074586_0_0_6"/>
<dbReference type="OrthoDB" id="9783283at2"/>
<dbReference type="UniPathway" id="UPA00359">
    <property type="reaction ID" value="UER00480"/>
</dbReference>
<dbReference type="Proteomes" id="UP000001485">
    <property type="component" value="Chromosome"/>
</dbReference>
<dbReference type="GO" id="GO:0005737">
    <property type="term" value="C:cytoplasm"/>
    <property type="evidence" value="ECO:0007669"/>
    <property type="project" value="InterPro"/>
</dbReference>
<dbReference type="GO" id="GO:0019897">
    <property type="term" value="C:extrinsic component of plasma membrane"/>
    <property type="evidence" value="ECO:0007669"/>
    <property type="project" value="UniProtKB-UniRule"/>
</dbReference>
<dbReference type="GO" id="GO:0030145">
    <property type="term" value="F:manganese ion binding"/>
    <property type="evidence" value="ECO:0007669"/>
    <property type="project" value="UniProtKB-UniRule"/>
</dbReference>
<dbReference type="GO" id="GO:0008758">
    <property type="term" value="F:UDP-2,3-diacylglucosamine hydrolase activity"/>
    <property type="evidence" value="ECO:0007669"/>
    <property type="project" value="UniProtKB-UniRule"/>
</dbReference>
<dbReference type="GO" id="GO:0009245">
    <property type="term" value="P:lipid A biosynthetic process"/>
    <property type="evidence" value="ECO:0007669"/>
    <property type="project" value="UniProtKB-UniRule"/>
</dbReference>
<dbReference type="CDD" id="cd07398">
    <property type="entry name" value="MPP_YbbF-LpxH"/>
    <property type="match status" value="1"/>
</dbReference>
<dbReference type="Gene3D" id="3.60.21.10">
    <property type="match status" value="1"/>
</dbReference>
<dbReference type="HAMAP" id="MF_00575">
    <property type="entry name" value="LpxH"/>
    <property type="match status" value="1"/>
</dbReference>
<dbReference type="InterPro" id="IPR004843">
    <property type="entry name" value="Calcineurin-like_PHP_ApaH"/>
</dbReference>
<dbReference type="InterPro" id="IPR043461">
    <property type="entry name" value="LpxH-like"/>
</dbReference>
<dbReference type="InterPro" id="IPR029052">
    <property type="entry name" value="Metallo-depent_PP-like"/>
</dbReference>
<dbReference type="InterPro" id="IPR010138">
    <property type="entry name" value="UDP-diacylglucosamine_Hdrlase"/>
</dbReference>
<dbReference type="NCBIfam" id="TIGR01854">
    <property type="entry name" value="lipid_A_lpxH"/>
    <property type="match status" value="1"/>
</dbReference>
<dbReference type="NCBIfam" id="NF003743">
    <property type="entry name" value="PRK05340.1"/>
    <property type="match status" value="1"/>
</dbReference>
<dbReference type="PANTHER" id="PTHR34990:SF1">
    <property type="entry name" value="UDP-2,3-DIACYLGLUCOSAMINE HYDROLASE"/>
    <property type="match status" value="1"/>
</dbReference>
<dbReference type="PANTHER" id="PTHR34990">
    <property type="entry name" value="UDP-2,3-DIACYLGLUCOSAMINE HYDROLASE-RELATED"/>
    <property type="match status" value="1"/>
</dbReference>
<dbReference type="Pfam" id="PF00149">
    <property type="entry name" value="Metallophos"/>
    <property type="match status" value="1"/>
</dbReference>
<dbReference type="SUPFAM" id="SSF56300">
    <property type="entry name" value="Metallo-dependent phosphatases"/>
    <property type="match status" value="1"/>
</dbReference>
<protein>
    <recommendedName>
        <fullName evidence="1">UDP-2,3-diacylglucosamine hydrolase</fullName>
        <ecNumber evidence="1">3.6.1.54</ecNumber>
    </recommendedName>
    <alternativeName>
        <fullName evidence="1">UDP-2,3-diacylglucosamine diphosphatase</fullName>
    </alternativeName>
</protein>
<sequence>MATLFIADLHLSQQEPAITAGFLRFLAEEAPKAEALYILGDFFDYWIGDDDPQPLHRQVAGALRQLSDNGVPCYFICGNRDFLLGKSYAKRCGMTLLPDEQIITLYGQPILLLHGDTLCSDDRDYQRYRRRVHNPLLQWLFRRLPLRLRLKIAVGMRQQSQRSNSAKAMTIMDVNQETVCATLRRHGVQRMIHGHTHRPALHHFSLDDGRCALRAVLGAWHTHGSMIRVDAQGIHLIELPAHPAEDEIITTRLRSANLV</sequence>